<sequence>MAGILCLCGMMRLLTALFIPVLIASIGLCLVLVLLFICTRLWIQRKKKQSVEIGKDGKKKRVVAFFHPYCNAGGGGERVLWCALRSLQKRYKDAIYVIYTGDKDVSEEQILNGAAARFNIKLSHPVKFIFLEKRGLVEASFYPRFTLLGQSLGSVVLGWEALTKCVPDIYIDSMGYAFTLPLFKYVGGCQVGCYVHYPTISMDMLSVVRSQNARFNNAAFISNNPVLSRLKLIYYYLFAVIYGWVGSCSDVIMVNSTWTFAHILDLWKCSERTSIVYPPCDVQTFLDINLNQHKDIEEHSIVSIGQFRPEKDHPLQICAFAALLKKKTTEKLKLKLILIGGCRNNEDELRVSELKKLSSELGIPVEFKVNIPFAELKKHLSEATIGLHTMWNEHFGIGIVECMAAGTIILAHNSGGPKLDIVVPYEEHETGFLADSVESYAAAMDYILCLTPEQRLTIRQNARRSVARFSDQEFEANFLASSEPLFM</sequence>
<reference key="1">
    <citation type="submission" date="2003-12" db="EMBL/GenBank/DDBJ databases">
        <authorList>
            <consortium name="NIH - Xenopus Gene Collection (XGC) project"/>
        </authorList>
    </citation>
    <scope>NUCLEOTIDE SEQUENCE [LARGE SCALE MRNA]</scope>
    <source>
        <tissue>Embryo</tissue>
    </source>
</reference>
<evidence type="ECO:0000250" key="1">
    <source>
        <dbReference type="UniProtKB" id="P53954"/>
    </source>
</evidence>
<evidence type="ECO:0000250" key="2">
    <source>
        <dbReference type="UniProtKB" id="Q2TAA5"/>
    </source>
</evidence>
<evidence type="ECO:0000255" key="3"/>
<evidence type="ECO:0000305" key="4"/>
<proteinExistence type="evidence at transcript level"/>
<organism>
    <name type="scientific">Xenopus tropicalis</name>
    <name type="common">Western clawed frog</name>
    <name type="synonym">Silurana tropicalis</name>
    <dbReference type="NCBI Taxonomy" id="8364"/>
    <lineage>
        <taxon>Eukaryota</taxon>
        <taxon>Metazoa</taxon>
        <taxon>Chordata</taxon>
        <taxon>Craniata</taxon>
        <taxon>Vertebrata</taxon>
        <taxon>Euteleostomi</taxon>
        <taxon>Amphibia</taxon>
        <taxon>Batrachia</taxon>
        <taxon>Anura</taxon>
        <taxon>Pipoidea</taxon>
        <taxon>Pipidae</taxon>
        <taxon>Xenopodinae</taxon>
        <taxon>Xenopus</taxon>
        <taxon>Silurana</taxon>
    </lineage>
</organism>
<keyword id="KW-0256">Endoplasmic reticulum</keyword>
<keyword id="KW-0328">Glycosyltransferase</keyword>
<keyword id="KW-0472">Membrane</keyword>
<keyword id="KW-1185">Reference proteome</keyword>
<keyword id="KW-0808">Transferase</keyword>
<keyword id="KW-0812">Transmembrane</keyword>
<keyword id="KW-1133">Transmembrane helix</keyword>
<gene>
    <name type="primary">alg11</name>
</gene>
<protein>
    <recommendedName>
        <fullName evidence="2">GDP-Man:Man(3)GlcNAc(2)-PP-Dol alpha-1,2-mannosyltransferase</fullName>
        <ecNumber evidence="2">2.4.1.131</ecNumber>
    </recommendedName>
    <alternativeName>
        <fullName>Asparagine-linked glycosylation protein 11 homolog</fullName>
    </alternativeName>
    <alternativeName>
        <fullName>Glycolipid 2-alpha-mannosyltransferase</fullName>
    </alternativeName>
</protein>
<dbReference type="EC" id="2.4.1.131" evidence="2"/>
<dbReference type="EMBL" id="BC064222">
    <property type="protein sequence ID" value="AAH64222.1"/>
    <property type="molecule type" value="mRNA"/>
</dbReference>
<dbReference type="RefSeq" id="NP_989283.1">
    <property type="nucleotide sequence ID" value="NM_203952.1"/>
</dbReference>
<dbReference type="SMR" id="Q6P312"/>
<dbReference type="FunCoup" id="Q6P312">
    <property type="interactions" value="2277"/>
</dbReference>
<dbReference type="STRING" id="8364.ENSXETP00000009838"/>
<dbReference type="CAZy" id="GT4">
    <property type="family name" value="Glycosyltransferase Family 4"/>
</dbReference>
<dbReference type="PaxDb" id="8364-ENSXETP00000044752"/>
<dbReference type="DNASU" id="394898"/>
<dbReference type="GeneID" id="394898"/>
<dbReference type="KEGG" id="xtr:394898"/>
<dbReference type="AGR" id="Xenbase:XB-GENE-5934131"/>
<dbReference type="CTD" id="440138"/>
<dbReference type="Xenbase" id="XB-GENE-5934131">
    <property type="gene designation" value="alg11"/>
</dbReference>
<dbReference type="eggNOG" id="KOG1387">
    <property type="taxonomic scope" value="Eukaryota"/>
</dbReference>
<dbReference type="HOGENOM" id="CLU_017896_2_0_1"/>
<dbReference type="InParanoid" id="Q6P312"/>
<dbReference type="OMA" id="ARLYGWV"/>
<dbReference type="OrthoDB" id="2276068at2759"/>
<dbReference type="PhylomeDB" id="Q6P312"/>
<dbReference type="TreeFam" id="TF313056"/>
<dbReference type="UniPathway" id="UPA00378"/>
<dbReference type="Proteomes" id="UP000008143">
    <property type="component" value="Chromosome 2"/>
</dbReference>
<dbReference type="Bgee" id="ENSXETG00000020712">
    <property type="expression patterns" value="Expressed in egg cell and 13 other cell types or tissues"/>
</dbReference>
<dbReference type="ExpressionAtlas" id="Q6P312">
    <property type="expression patterns" value="baseline"/>
</dbReference>
<dbReference type="GO" id="GO:0005789">
    <property type="term" value="C:endoplasmic reticulum membrane"/>
    <property type="evidence" value="ECO:0000250"/>
    <property type="project" value="UniProtKB"/>
</dbReference>
<dbReference type="GO" id="GO:0004377">
    <property type="term" value="F:GDP-Man:Man3GlcNAc2-PP-Dol alpha-1,2-mannosyltransferase activity"/>
    <property type="evidence" value="ECO:0000250"/>
    <property type="project" value="UniProtKB"/>
</dbReference>
<dbReference type="GO" id="GO:0006488">
    <property type="term" value="P:dolichol-linked oligosaccharide biosynthetic process"/>
    <property type="evidence" value="ECO:0000250"/>
    <property type="project" value="UniProtKB"/>
</dbReference>
<dbReference type="GO" id="GO:0006487">
    <property type="term" value="P:protein N-linked glycosylation"/>
    <property type="evidence" value="ECO:0000250"/>
    <property type="project" value="UniProtKB"/>
</dbReference>
<dbReference type="CDD" id="cd03806">
    <property type="entry name" value="GT4_ALG11-like"/>
    <property type="match status" value="1"/>
</dbReference>
<dbReference type="FunFam" id="3.40.50.2000:FF:000076">
    <property type="entry name" value="GDP-Man:Man(3)GlcNAc(2)-PP-Dol alpha-1,2-mannosyltransferase"/>
    <property type="match status" value="1"/>
</dbReference>
<dbReference type="Gene3D" id="3.40.50.2000">
    <property type="entry name" value="Glycogen Phosphorylase B"/>
    <property type="match status" value="1"/>
</dbReference>
<dbReference type="InterPro" id="IPR038013">
    <property type="entry name" value="ALG11"/>
</dbReference>
<dbReference type="InterPro" id="IPR031814">
    <property type="entry name" value="ALG11_N"/>
</dbReference>
<dbReference type="InterPro" id="IPR001296">
    <property type="entry name" value="Glyco_trans_1"/>
</dbReference>
<dbReference type="PANTHER" id="PTHR45919">
    <property type="entry name" value="GDP-MAN:MAN(3)GLCNAC(2)-PP-DOL ALPHA-1,2-MANNOSYLTRANSFERASE"/>
    <property type="match status" value="1"/>
</dbReference>
<dbReference type="PANTHER" id="PTHR45919:SF1">
    <property type="entry name" value="GDP-MAN:MAN(3)GLCNAC(2)-PP-DOL ALPHA-1,2-MANNOSYLTRANSFERASE"/>
    <property type="match status" value="1"/>
</dbReference>
<dbReference type="Pfam" id="PF15924">
    <property type="entry name" value="ALG11_N"/>
    <property type="match status" value="1"/>
</dbReference>
<dbReference type="Pfam" id="PF00534">
    <property type="entry name" value="Glycos_transf_1"/>
    <property type="match status" value="1"/>
</dbReference>
<dbReference type="SUPFAM" id="SSF53756">
    <property type="entry name" value="UDP-Glycosyltransferase/glycogen phosphorylase"/>
    <property type="match status" value="1"/>
</dbReference>
<feature type="chain" id="PRO_0000295621" description="GDP-Man:Man(3)GlcNAc(2)-PP-Dol alpha-1,2-mannosyltransferase">
    <location>
        <begin position="1"/>
        <end position="487"/>
    </location>
</feature>
<feature type="topological domain" description="Lumenal" evidence="1">
    <location>
        <begin position="1"/>
        <end position="16"/>
    </location>
</feature>
<feature type="transmembrane region" description="Helical" evidence="3">
    <location>
        <begin position="17"/>
        <end position="37"/>
    </location>
</feature>
<feature type="topological domain" description="Cytoplasmic" evidence="1">
    <location>
        <begin position="38"/>
        <end position="231"/>
    </location>
</feature>
<feature type="intramembrane region" description="Helical" evidence="3">
    <location>
        <begin position="232"/>
        <end position="252"/>
    </location>
</feature>
<feature type="topological domain" description="Cytoplasmic" evidence="1">
    <location>
        <begin position="253"/>
        <end position="394"/>
    </location>
</feature>
<feature type="intramembrane region" description="Helical" evidence="3">
    <location>
        <begin position="395"/>
        <end position="415"/>
    </location>
</feature>
<feature type="topological domain" description="Cytoplasmic" evidence="1">
    <location>
        <begin position="416"/>
        <end position="487"/>
    </location>
</feature>
<comment type="function">
    <text evidence="2">GDP-Man:Man(3)GlcNAc(2)-PP-Dol alpha-1,2-mannosyltransferase that operates in the biosynthetic pathway of dolichol-linked oligosaccharides, the glycan precursors employed in protein asparagine (N)-glycosylation. The assembly of dolichol-linked oligosaccharides begins on the cytosolic side of the endoplasmic reticulum membrane and finishes in its lumen. The sequential addition of sugars to dolichol pyrophosphate produces dolichol-linked oligosaccharides containing fourteen sugars, including two GlcNAcs, nine mannoses and three glucoses. Once assembled, the oligosaccharide is transferred from the lipid to nascent proteins by oligosaccharyltransferases. Catalyzes, on the cytoplasmic face of the endoplasmic reticulum, the addition of the fourth and fifth mannose residues to the dolichol-linked oligosaccharide chain, to produce Man(5)GlcNAc(2)-PP-dolichol core oligosaccharide. Man(5)GlcNAc(2)-PP-dolichol is a substrate for ALG3, the following enzyme in the biosynthetic pathway.</text>
</comment>
<comment type="catalytic activity">
    <reaction evidence="2">
        <text>an alpha-D-Man-(1-&gt;3)-[alpha-D-Man-(1-&gt;6)]-beta-D-Man-(1-&gt;4)-beta-D-GlcNAc-(1-&gt;4)-alpha-D-GlcNAc-diphospho-di-trans,poly-cis-dolichol + 2 GDP-alpha-D-mannose = an alpha-D-Man-(1-&gt;2)-alpha-D-Man-(1-&gt;2)-alpha-D-Man-(1-&gt;3)-[alpha-D-Man-(1-&gt;6)]-beta-D-Man-(1-&gt;4)-beta-D-GlcNAc-(1-&gt;4)-alpha-D-GlcNAc-diphospho-di-trans,poly-cis-dolichol + 2 GDP + 2 H(+)</text>
        <dbReference type="Rhea" id="RHEA:29523"/>
        <dbReference type="Rhea" id="RHEA-COMP:19515"/>
        <dbReference type="Rhea" id="RHEA-COMP:19516"/>
        <dbReference type="ChEBI" id="CHEBI:15378"/>
        <dbReference type="ChEBI" id="CHEBI:57527"/>
        <dbReference type="ChEBI" id="CHEBI:58189"/>
        <dbReference type="ChEBI" id="CHEBI:132511"/>
        <dbReference type="ChEBI" id="CHEBI:132515"/>
        <dbReference type="EC" id="2.4.1.131"/>
    </reaction>
    <physiologicalReaction direction="left-to-right" evidence="2">
        <dbReference type="Rhea" id="RHEA:29524"/>
    </physiologicalReaction>
</comment>
<comment type="pathway">
    <text evidence="2">Protein modification; protein glycosylation.</text>
</comment>
<comment type="subcellular location">
    <subcellularLocation>
        <location evidence="2">Endoplasmic reticulum membrane</location>
        <topology evidence="1">Single-pass membrane protein</topology>
    </subcellularLocation>
</comment>
<comment type="similarity">
    <text evidence="4">Belongs to the glycosyltransferase group 1 family. Glycosyltransferase 4 subfamily.</text>
</comment>
<name>ALG11_XENTR</name>
<accession>Q6P312</accession>